<evidence type="ECO:0000255" key="1">
    <source>
        <dbReference type="HAMAP-Rule" id="MF_01815"/>
    </source>
</evidence>
<feature type="chain" id="PRO_1000187871" description="Beta-ketoacyl-[acyl-carrier-protein] synthase III">
    <location>
        <begin position="1"/>
        <end position="355"/>
    </location>
</feature>
<feature type="region of interest" description="ACP-binding" evidence="1">
    <location>
        <begin position="281"/>
        <end position="285"/>
    </location>
</feature>
<feature type="active site" evidence="1">
    <location>
        <position position="122"/>
    </location>
</feature>
<feature type="active site" evidence="1">
    <location>
        <position position="280"/>
    </location>
</feature>
<feature type="active site" evidence="1">
    <location>
        <position position="311"/>
    </location>
</feature>
<reference key="1">
    <citation type="journal article" date="2008" name="J. Bacteriol.">
        <title>Complete genome sequence of the soil actinomycete Kocuria rhizophila.</title>
        <authorList>
            <person name="Takarada H."/>
            <person name="Sekine M."/>
            <person name="Kosugi H."/>
            <person name="Matsuo Y."/>
            <person name="Fujisawa T."/>
            <person name="Omata S."/>
            <person name="Kishi E."/>
            <person name="Shimizu A."/>
            <person name="Tsukatani N."/>
            <person name="Tanikawa S."/>
            <person name="Fujita N."/>
            <person name="Harayama S."/>
        </authorList>
    </citation>
    <scope>NUCLEOTIDE SEQUENCE [LARGE SCALE GENOMIC DNA]</scope>
    <source>
        <strain>ATCC 9341 / DSM 348 / NBRC 103217 / DC2201</strain>
    </source>
</reference>
<gene>
    <name evidence="1" type="primary">fabH</name>
    <name type="ordered locus">KRH_10780</name>
</gene>
<protein>
    <recommendedName>
        <fullName evidence="1">Beta-ketoacyl-[acyl-carrier-protein] synthase III</fullName>
        <shortName evidence="1">Beta-ketoacyl-ACP synthase III</shortName>
        <shortName evidence="1">KAS III</shortName>
        <ecNumber evidence="1">2.3.1.180</ecNumber>
    </recommendedName>
    <alternativeName>
        <fullName evidence="1">3-oxoacyl-[acyl-carrier-protein] synthase 3</fullName>
    </alternativeName>
    <alternativeName>
        <fullName evidence="1">3-oxoacyl-[acyl-carrier-protein] synthase III</fullName>
    </alternativeName>
</protein>
<keyword id="KW-0012">Acyltransferase</keyword>
<keyword id="KW-0963">Cytoplasm</keyword>
<keyword id="KW-0275">Fatty acid biosynthesis</keyword>
<keyword id="KW-0276">Fatty acid metabolism</keyword>
<keyword id="KW-0444">Lipid biosynthesis</keyword>
<keyword id="KW-0443">Lipid metabolism</keyword>
<keyword id="KW-0511">Multifunctional enzyme</keyword>
<keyword id="KW-1185">Reference proteome</keyword>
<keyword id="KW-0808">Transferase</keyword>
<organism>
    <name type="scientific">Kocuria rhizophila (strain ATCC 9341 / DSM 348 / NBRC 103217 / DC2201)</name>
    <dbReference type="NCBI Taxonomy" id="378753"/>
    <lineage>
        <taxon>Bacteria</taxon>
        <taxon>Bacillati</taxon>
        <taxon>Actinomycetota</taxon>
        <taxon>Actinomycetes</taxon>
        <taxon>Micrococcales</taxon>
        <taxon>Micrococcaceae</taxon>
        <taxon>Kocuria</taxon>
    </lineage>
</organism>
<dbReference type="EC" id="2.3.1.180" evidence="1"/>
<dbReference type="EMBL" id="AP009152">
    <property type="protein sequence ID" value="BAG29425.1"/>
    <property type="molecule type" value="Genomic_DNA"/>
</dbReference>
<dbReference type="RefSeq" id="WP_012398146.1">
    <property type="nucleotide sequence ID" value="NZ_VECX01000005.1"/>
</dbReference>
<dbReference type="SMR" id="B2GFZ7"/>
<dbReference type="STRING" id="378753.KRH_10780"/>
<dbReference type="KEGG" id="krh:KRH_10780"/>
<dbReference type="eggNOG" id="COG0332">
    <property type="taxonomic scope" value="Bacteria"/>
</dbReference>
<dbReference type="HOGENOM" id="CLU_039592_4_0_11"/>
<dbReference type="OrthoDB" id="9815506at2"/>
<dbReference type="UniPathway" id="UPA00094"/>
<dbReference type="Proteomes" id="UP000008838">
    <property type="component" value="Chromosome"/>
</dbReference>
<dbReference type="GO" id="GO:0005737">
    <property type="term" value="C:cytoplasm"/>
    <property type="evidence" value="ECO:0007669"/>
    <property type="project" value="UniProtKB-SubCell"/>
</dbReference>
<dbReference type="GO" id="GO:0004315">
    <property type="term" value="F:3-oxoacyl-[acyl-carrier-protein] synthase activity"/>
    <property type="evidence" value="ECO:0007669"/>
    <property type="project" value="InterPro"/>
</dbReference>
<dbReference type="GO" id="GO:0033818">
    <property type="term" value="F:beta-ketoacyl-acyl-carrier-protein synthase III activity"/>
    <property type="evidence" value="ECO:0007669"/>
    <property type="project" value="UniProtKB-UniRule"/>
</dbReference>
<dbReference type="GO" id="GO:0006633">
    <property type="term" value="P:fatty acid biosynthetic process"/>
    <property type="evidence" value="ECO:0007669"/>
    <property type="project" value="UniProtKB-UniRule"/>
</dbReference>
<dbReference type="GO" id="GO:0044550">
    <property type="term" value="P:secondary metabolite biosynthetic process"/>
    <property type="evidence" value="ECO:0007669"/>
    <property type="project" value="TreeGrafter"/>
</dbReference>
<dbReference type="CDD" id="cd00830">
    <property type="entry name" value="KAS_III"/>
    <property type="match status" value="1"/>
</dbReference>
<dbReference type="Gene3D" id="3.40.47.10">
    <property type="match status" value="2"/>
</dbReference>
<dbReference type="HAMAP" id="MF_01815">
    <property type="entry name" value="FabH"/>
    <property type="match status" value="1"/>
</dbReference>
<dbReference type="InterPro" id="IPR013747">
    <property type="entry name" value="ACP_syn_III_C"/>
</dbReference>
<dbReference type="InterPro" id="IPR013751">
    <property type="entry name" value="ACP_syn_III_N"/>
</dbReference>
<dbReference type="InterPro" id="IPR004655">
    <property type="entry name" value="FabH"/>
</dbReference>
<dbReference type="InterPro" id="IPR016039">
    <property type="entry name" value="Thiolase-like"/>
</dbReference>
<dbReference type="NCBIfam" id="TIGR00747">
    <property type="entry name" value="fabH"/>
    <property type="match status" value="1"/>
</dbReference>
<dbReference type="NCBIfam" id="NF006829">
    <property type="entry name" value="PRK09352.1"/>
    <property type="match status" value="1"/>
</dbReference>
<dbReference type="PANTHER" id="PTHR34069">
    <property type="entry name" value="3-OXOACYL-[ACYL-CARRIER-PROTEIN] SYNTHASE 3"/>
    <property type="match status" value="1"/>
</dbReference>
<dbReference type="PANTHER" id="PTHR34069:SF2">
    <property type="entry name" value="BETA-KETOACYL-[ACYL-CARRIER-PROTEIN] SYNTHASE III"/>
    <property type="match status" value="1"/>
</dbReference>
<dbReference type="Pfam" id="PF08545">
    <property type="entry name" value="ACP_syn_III"/>
    <property type="match status" value="1"/>
</dbReference>
<dbReference type="Pfam" id="PF08541">
    <property type="entry name" value="ACP_syn_III_C"/>
    <property type="match status" value="1"/>
</dbReference>
<dbReference type="SUPFAM" id="SSF53901">
    <property type="entry name" value="Thiolase-like"/>
    <property type="match status" value="1"/>
</dbReference>
<accession>B2GFZ7</accession>
<proteinExistence type="inferred from homology"/>
<comment type="function">
    <text evidence="1">Catalyzes the condensation reaction of fatty acid synthesis by the addition to an acyl acceptor of two carbons from malonyl-ACP. Catalyzes the first condensation reaction which initiates fatty acid synthesis and may therefore play a role in governing the total rate of fatty acid production. Possesses both acetoacetyl-ACP synthase and acetyl transacylase activities. Its substrate specificity determines the biosynthesis of branched-chain and/or straight-chain of fatty acids.</text>
</comment>
<comment type="catalytic activity">
    <reaction evidence="1">
        <text>malonyl-[ACP] + acetyl-CoA + H(+) = 3-oxobutanoyl-[ACP] + CO2 + CoA</text>
        <dbReference type="Rhea" id="RHEA:12080"/>
        <dbReference type="Rhea" id="RHEA-COMP:9623"/>
        <dbReference type="Rhea" id="RHEA-COMP:9625"/>
        <dbReference type="ChEBI" id="CHEBI:15378"/>
        <dbReference type="ChEBI" id="CHEBI:16526"/>
        <dbReference type="ChEBI" id="CHEBI:57287"/>
        <dbReference type="ChEBI" id="CHEBI:57288"/>
        <dbReference type="ChEBI" id="CHEBI:78449"/>
        <dbReference type="ChEBI" id="CHEBI:78450"/>
        <dbReference type="EC" id="2.3.1.180"/>
    </reaction>
</comment>
<comment type="pathway">
    <text evidence="1">Lipid metabolism; fatty acid biosynthesis.</text>
</comment>
<comment type="subunit">
    <text evidence="1">Homodimer.</text>
</comment>
<comment type="subcellular location">
    <subcellularLocation>
        <location evidence="1">Cytoplasm</location>
    </subcellularLocation>
</comment>
<comment type="domain">
    <text evidence="1">The last Arg residue of the ACP-binding site is essential for the weak association between ACP/AcpP and FabH.</text>
</comment>
<comment type="similarity">
    <text evidence="1">Belongs to the thiolase-like superfamily. FabH family.</text>
</comment>
<sequence length="355" mass="37822">MATIKQNIPHAHTRILGIGAYRPSEIVTNDDVCQWIESSDEWIVKRTGIHTRHRAPEDVSVLDMAEHAAREALENSGLTGEQLSTIIVSTVSFPYLTPSLAANLADRLGATPAAAYDISAACAGYCYGVAQADSLVRSGDSTNVLVIGVEKLSDVIDNHERSISFLLGDGAGAVVIGPSEVPGIGPSVWGSDGSKWDAIRMTHPLTDIRTVERGGQRTFAKDLVDPETGEMDPDATLWPTLRQDGQTVFRWASWEGARVAQEALDAAGLAPEDLAAFVPHQANMRIIDQMAKVLKLPESVIIARDIAEAGNTSAASIPLATHRLLAEHPELSGKPSLQIGFGAGLVYGAQVVLLP</sequence>
<name>FABH_KOCRD</name>